<accession>Q646C6</accession>
<comment type="function">
    <text evidence="1">Gustducin-coupled receptor implicated in the perception of bitter compounds in the oral cavity and the gastrointestinal tract. Signals through PLCB2 and the calcium-regulated cation channel TRPM5 (By similarity).</text>
</comment>
<comment type="subcellular location">
    <subcellularLocation>
        <location>Membrane</location>
        <topology>Multi-pass membrane protein</topology>
    </subcellularLocation>
</comment>
<comment type="miscellaneous">
    <text>Several bitter taste receptors are expressed in a single taste receptor cell.</text>
</comment>
<comment type="similarity">
    <text evidence="3">Belongs to the G-protein coupled receptor T2R family.</text>
</comment>
<keyword id="KW-0297">G-protein coupled receptor</keyword>
<keyword id="KW-0325">Glycoprotein</keyword>
<keyword id="KW-0472">Membrane</keyword>
<keyword id="KW-0675">Receptor</keyword>
<keyword id="KW-1185">Reference proteome</keyword>
<keyword id="KW-0716">Sensory transduction</keyword>
<keyword id="KW-0919">Taste</keyword>
<keyword id="KW-0807">Transducer</keyword>
<keyword id="KW-0812">Transmembrane</keyword>
<keyword id="KW-1133">Transmembrane helix</keyword>
<reference key="1">
    <citation type="journal article" date="2005" name="Mol. Biol. Evol.">
        <title>Evolution of bitter taste receptors in humans and apes.</title>
        <authorList>
            <person name="Fischer A."/>
            <person name="Gilad Y."/>
            <person name="Man O."/>
            <person name="Paeaebo S."/>
        </authorList>
    </citation>
    <scope>NUCLEOTIDE SEQUENCE [GENOMIC DNA]</scope>
</reference>
<organism>
    <name type="scientific">Pan troglodytes</name>
    <name type="common">Chimpanzee</name>
    <dbReference type="NCBI Taxonomy" id="9598"/>
    <lineage>
        <taxon>Eukaryota</taxon>
        <taxon>Metazoa</taxon>
        <taxon>Chordata</taxon>
        <taxon>Craniata</taxon>
        <taxon>Vertebrata</taxon>
        <taxon>Euteleostomi</taxon>
        <taxon>Mammalia</taxon>
        <taxon>Eutheria</taxon>
        <taxon>Euarchontoglires</taxon>
        <taxon>Primates</taxon>
        <taxon>Haplorrhini</taxon>
        <taxon>Catarrhini</taxon>
        <taxon>Hominidae</taxon>
        <taxon>Pan</taxon>
    </lineage>
</organism>
<gene>
    <name type="primary">TAS2R9</name>
</gene>
<feature type="chain" id="PRO_0000082234" description="Taste receptor type 2 member 9">
    <location>
        <begin position="1"/>
        <end position="312"/>
    </location>
</feature>
<feature type="topological domain" description="Extracellular" evidence="2">
    <location>
        <begin position="1"/>
        <end position="9"/>
    </location>
</feature>
<feature type="transmembrane region" description="Helical; Name=1" evidence="2">
    <location>
        <begin position="10"/>
        <end position="32"/>
    </location>
</feature>
<feature type="topological domain" description="Cytoplasmic" evidence="2">
    <location>
        <begin position="33"/>
        <end position="52"/>
    </location>
</feature>
<feature type="transmembrane region" description="Helical; Name=2" evidence="2">
    <location>
        <begin position="53"/>
        <end position="72"/>
    </location>
</feature>
<feature type="topological domain" description="Extracellular" evidence="2">
    <location>
        <begin position="73"/>
        <end position="86"/>
    </location>
</feature>
<feature type="transmembrane region" description="Helical; Name=3" evidence="2">
    <location>
        <begin position="87"/>
        <end position="109"/>
    </location>
</feature>
<feature type="topological domain" description="Cytoplasmic" evidence="2">
    <location>
        <begin position="110"/>
        <end position="128"/>
    </location>
</feature>
<feature type="transmembrane region" description="Helical; Name=4" evidence="2">
    <location>
        <begin position="129"/>
        <end position="146"/>
    </location>
</feature>
<feature type="topological domain" description="Extracellular" evidence="2">
    <location>
        <begin position="147"/>
        <end position="180"/>
    </location>
</feature>
<feature type="transmembrane region" description="Helical; Name=5" evidence="2">
    <location>
        <begin position="181"/>
        <end position="203"/>
    </location>
</feature>
<feature type="topological domain" description="Cytoplasmic" evidence="2">
    <location>
        <begin position="204"/>
        <end position="234"/>
    </location>
</feature>
<feature type="transmembrane region" description="Helical; Name=6" evidence="2">
    <location>
        <begin position="235"/>
        <end position="257"/>
    </location>
</feature>
<feature type="topological domain" description="Extracellular" evidence="2">
    <location>
        <begin position="258"/>
        <end position="261"/>
    </location>
</feature>
<feature type="transmembrane region" description="Helical; Name=7" evidence="2">
    <location>
        <begin position="262"/>
        <end position="284"/>
    </location>
</feature>
<feature type="topological domain" description="Cytoplasmic" evidence="2">
    <location>
        <begin position="285"/>
        <end position="312"/>
    </location>
</feature>
<feature type="glycosylation site" description="N-linked (GlcNAc...) asparagine" evidence="2">
    <location>
        <position position="164"/>
    </location>
</feature>
<evidence type="ECO:0000250" key="1"/>
<evidence type="ECO:0000255" key="2"/>
<evidence type="ECO:0000305" key="3"/>
<sequence>MPSAIEAIYIILIAGELTIGIWGNGFIVLVNCXDWLKRRDISLIDIILISLAISRICLLCVISLDGFFMLLFPGTYGNSVLVSIVNVVWTFANNSSLWFTSCLSIFYLLKIANISHPFFFWLKLKINKVMLAILLGSFLISLIISVXKNDDMWYHLFKVSXEENITWEFKVSKIPGTFKQLTLNLGGRVPFILCLISFFLLLFSLVRHTKQIQLHATGFRDPSTEAHMRAIKAVIIFLLLLIVYYPVFLVMTSSALIPQGKLVLMIGDIVTVIFPSSHSFILIMGNSKLREAFLKMLRFVKGFLRRRKPFVP</sequence>
<protein>
    <recommendedName>
        <fullName>Taste receptor type 2 member 9</fullName>
        <shortName>T2R9</shortName>
    </recommendedName>
</protein>
<name>TA2R9_PANTR</name>
<proteinExistence type="inferred from homology"/>
<dbReference type="EMBL" id="AY724871">
    <property type="protein sequence ID" value="AAU21093.1"/>
    <property type="molecule type" value="Genomic_DNA"/>
</dbReference>
<dbReference type="FunCoup" id="Q646C6">
    <property type="interactions" value="190"/>
</dbReference>
<dbReference type="STRING" id="9598.ENSPTRP00000008013"/>
<dbReference type="GlyCosmos" id="Q646C6">
    <property type="glycosylation" value="1 site, No reported glycans"/>
</dbReference>
<dbReference type="PaxDb" id="9598-ENSPTRP00000008013"/>
<dbReference type="eggNOG" id="ENOG502SY8P">
    <property type="taxonomic scope" value="Eukaryota"/>
</dbReference>
<dbReference type="InParanoid" id="Q646C6"/>
<dbReference type="Proteomes" id="UP000002277">
    <property type="component" value="Unplaced"/>
</dbReference>
<dbReference type="GO" id="GO:0016020">
    <property type="term" value="C:membrane"/>
    <property type="evidence" value="ECO:0000318"/>
    <property type="project" value="GO_Central"/>
</dbReference>
<dbReference type="GO" id="GO:0005886">
    <property type="term" value="C:plasma membrane"/>
    <property type="evidence" value="ECO:0007669"/>
    <property type="project" value="UniProtKB-ARBA"/>
</dbReference>
<dbReference type="GO" id="GO:0033038">
    <property type="term" value="F:bitter taste receptor activity"/>
    <property type="evidence" value="ECO:0000318"/>
    <property type="project" value="GO_Central"/>
</dbReference>
<dbReference type="GO" id="GO:0004930">
    <property type="term" value="F:G protein-coupled receptor activity"/>
    <property type="evidence" value="ECO:0007669"/>
    <property type="project" value="UniProtKB-KW"/>
</dbReference>
<dbReference type="GO" id="GO:0001580">
    <property type="term" value="P:detection of chemical stimulus involved in sensory perception of bitter taste"/>
    <property type="evidence" value="ECO:0000318"/>
    <property type="project" value="GO_Central"/>
</dbReference>
<dbReference type="CDD" id="cd15023">
    <property type="entry name" value="7tm_TAS2R7-like"/>
    <property type="match status" value="1"/>
</dbReference>
<dbReference type="FunFam" id="1.20.1070.10:FF:000042">
    <property type="entry name" value="Taste receptor type 2 member 7"/>
    <property type="match status" value="1"/>
</dbReference>
<dbReference type="Gene3D" id="1.20.1070.10">
    <property type="entry name" value="Rhodopsin 7-helix transmembrane proteins"/>
    <property type="match status" value="1"/>
</dbReference>
<dbReference type="InterPro" id="IPR007960">
    <property type="entry name" value="TAS2R"/>
</dbReference>
<dbReference type="PANTHER" id="PTHR11394">
    <property type="entry name" value="TASTE RECEPTOR TYPE 2"/>
    <property type="match status" value="1"/>
</dbReference>
<dbReference type="PANTHER" id="PTHR11394:SF29">
    <property type="entry name" value="TASTE RECEPTOR TYPE 2 MEMBER 9"/>
    <property type="match status" value="1"/>
</dbReference>
<dbReference type="Pfam" id="PF05296">
    <property type="entry name" value="TAS2R"/>
    <property type="match status" value="1"/>
</dbReference>
<dbReference type="SUPFAM" id="SSF81321">
    <property type="entry name" value="Family A G protein-coupled receptor-like"/>
    <property type="match status" value="1"/>
</dbReference>